<feature type="chain" id="PRO_0000302122" description="U7-ctenitoxin-Co1a">
    <location>
        <begin position="1"/>
        <end position="12" status="greater than"/>
    </location>
</feature>
<feature type="non-terminal residue">
    <location>
        <position position="12"/>
    </location>
</feature>
<protein>
    <recommendedName>
        <fullName>U7-ctenitoxin-Co1a</fullName>
        <shortName>U7-CNTX-Co1a</shortName>
    </recommendedName>
    <alternativeName>
        <fullName>Neurotoxin Oc F40-4</fullName>
    </alternativeName>
</protein>
<sequence>ACLDIGNSCRED</sequence>
<organism>
    <name type="scientific">Ctenus ornatus</name>
    <name type="common">Brazilian spider</name>
    <name type="synonym">Oligoctenus ornatus</name>
    <dbReference type="NCBI Taxonomy" id="406443"/>
    <lineage>
        <taxon>Eukaryota</taxon>
        <taxon>Metazoa</taxon>
        <taxon>Ecdysozoa</taxon>
        <taxon>Arthropoda</taxon>
        <taxon>Chelicerata</taxon>
        <taxon>Arachnida</taxon>
        <taxon>Araneae</taxon>
        <taxon>Araneomorphae</taxon>
        <taxon>Entelegynae</taxon>
        <taxon>Lycosoidea</taxon>
        <taxon>Ctenidae</taxon>
        <taxon>Oligoctenus</taxon>
    </lineage>
</organism>
<reference evidence="4" key="1">
    <citation type="submission" date="2007-07" db="UniProtKB">
        <authorList>
            <person name="Borges M.H."/>
            <person name="Oliveira C.F.B."/>
            <person name="Goncalves J.M."/>
            <person name="Rates B."/>
            <person name="Santos D.M."/>
            <person name="Pimenta A.M.C."/>
            <person name="Cordeiro M.N."/>
            <person name="Richardson M."/>
        </authorList>
    </citation>
    <scope>PROTEIN SEQUENCE</scope>
    <scope>SUBCELLULAR LOCATION</scope>
    <scope>TISSUE SPECIFICITY</scope>
    <scope>MASS SPECTROMETRY</scope>
    <source>
        <tissue>Venom</tissue>
    </source>
</reference>
<accession>P85274</accession>
<dbReference type="ArachnoServer" id="AS000315">
    <property type="toxin name" value="U7-ctenitoxin-Co1a"/>
</dbReference>
<dbReference type="GO" id="GO:0005576">
    <property type="term" value="C:extracellular region"/>
    <property type="evidence" value="ECO:0007669"/>
    <property type="project" value="UniProtKB-SubCell"/>
</dbReference>
<dbReference type="GO" id="GO:0090729">
    <property type="term" value="F:toxin activity"/>
    <property type="evidence" value="ECO:0007669"/>
    <property type="project" value="UniProtKB-KW"/>
</dbReference>
<name>TX90A_CTEON</name>
<comment type="function">
    <text evidence="1">Neurotoxin.</text>
</comment>
<comment type="subcellular location">
    <subcellularLocation>
        <location evidence="3">Secreted</location>
    </subcellularLocation>
</comment>
<comment type="tissue specificity">
    <text evidence="3">Expressed by the venom gland.</text>
</comment>
<comment type="mass spectrometry"/>
<comment type="similarity">
    <text evidence="2">Belongs to the neurotoxin 09 (Tx3-6) family.</text>
</comment>
<keyword id="KW-0903">Direct protein sequencing</keyword>
<keyword id="KW-0528">Neurotoxin</keyword>
<keyword id="KW-0964">Secreted</keyword>
<keyword id="KW-0800">Toxin</keyword>
<evidence type="ECO:0000250" key="1">
    <source>
        <dbReference type="UniProtKB" id="P0C2S8"/>
    </source>
</evidence>
<evidence type="ECO:0000255" key="2"/>
<evidence type="ECO:0000269" key="3">
    <source ref="1"/>
</evidence>
<evidence type="ECO:0000305" key="4"/>
<proteinExistence type="evidence at protein level"/>